<proteinExistence type="inferred from homology"/>
<comment type="function">
    <text evidence="1">One of the proteins required for the normal export of preproteins out of the cell cytoplasm. It is a molecular chaperone that binds to a subset of precursor proteins, maintaining them in a translocation-competent state. It also specifically binds to its receptor SecA.</text>
</comment>
<comment type="subunit">
    <text evidence="1">Homotetramer, a dimer of dimers. One homotetramer interacts with 1 SecA dimer.</text>
</comment>
<comment type="subcellular location">
    <subcellularLocation>
        <location evidence="1">Cytoplasm</location>
    </subcellularLocation>
</comment>
<comment type="similarity">
    <text evidence="1">Belongs to the SecB family.</text>
</comment>
<reference key="1">
    <citation type="submission" date="2006-06" db="EMBL/GenBank/DDBJ databases">
        <title>Complete sequence of chromosome of Mesorhizobium sp. BNC1.</title>
        <authorList>
            <consortium name="US DOE Joint Genome Institute"/>
            <person name="Copeland A."/>
            <person name="Lucas S."/>
            <person name="Lapidus A."/>
            <person name="Barry K."/>
            <person name="Detter J.C."/>
            <person name="Glavina del Rio T."/>
            <person name="Hammon N."/>
            <person name="Israni S."/>
            <person name="Dalin E."/>
            <person name="Tice H."/>
            <person name="Pitluck S."/>
            <person name="Chertkov O."/>
            <person name="Brettin T."/>
            <person name="Bruce D."/>
            <person name="Han C."/>
            <person name="Tapia R."/>
            <person name="Gilna P."/>
            <person name="Schmutz J."/>
            <person name="Larimer F."/>
            <person name="Land M."/>
            <person name="Hauser L."/>
            <person name="Kyrpides N."/>
            <person name="Mikhailova N."/>
            <person name="Richardson P."/>
        </authorList>
    </citation>
    <scope>NUCLEOTIDE SEQUENCE [LARGE SCALE GENOMIC DNA]</scope>
    <source>
        <strain>BNC1</strain>
    </source>
</reference>
<sequence>MADQPSGNNDAKQAETNGNTVPASLNVLTQYIKDLSFESPGAPQSLRARDKAPSININVNVNANPLGGTDYDVLLTLTAKAEADNVVLFNVELIYGGVFRIQGFPQEHMLPLLFIECPRLLFPFARQIIADATRNGGFPPLMIDPIDFARMFQQRLAEEEARRKVQVS</sequence>
<gene>
    <name evidence="1" type="primary">secB</name>
    <name type="ordered locus">Meso_3483</name>
</gene>
<feature type="chain" id="PRO_1000062484" description="Protein-export protein SecB">
    <location>
        <begin position="1"/>
        <end position="168"/>
    </location>
</feature>
<feature type="region of interest" description="Disordered" evidence="2">
    <location>
        <begin position="1"/>
        <end position="21"/>
    </location>
</feature>
<protein>
    <recommendedName>
        <fullName evidence="1">Protein-export protein SecB</fullName>
    </recommendedName>
</protein>
<name>SECB_CHESB</name>
<keyword id="KW-0143">Chaperone</keyword>
<keyword id="KW-0963">Cytoplasm</keyword>
<keyword id="KW-0653">Protein transport</keyword>
<keyword id="KW-0811">Translocation</keyword>
<keyword id="KW-0813">Transport</keyword>
<dbReference type="EMBL" id="CP000390">
    <property type="protein sequence ID" value="ABG64854.1"/>
    <property type="molecule type" value="Genomic_DNA"/>
</dbReference>
<dbReference type="SMR" id="Q11CM1"/>
<dbReference type="STRING" id="266779.Meso_3483"/>
<dbReference type="KEGG" id="mes:Meso_3483"/>
<dbReference type="eggNOG" id="COG1952">
    <property type="taxonomic scope" value="Bacteria"/>
</dbReference>
<dbReference type="HOGENOM" id="CLU_111574_0_0_5"/>
<dbReference type="OrthoDB" id="9795145at2"/>
<dbReference type="GO" id="GO:0005737">
    <property type="term" value="C:cytoplasm"/>
    <property type="evidence" value="ECO:0007669"/>
    <property type="project" value="UniProtKB-SubCell"/>
</dbReference>
<dbReference type="GO" id="GO:0051082">
    <property type="term" value="F:unfolded protein binding"/>
    <property type="evidence" value="ECO:0007669"/>
    <property type="project" value="InterPro"/>
</dbReference>
<dbReference type="GO" id="GO:0006457">
    <property type="term" value="P:protein folding"/>
    <property type="evidence" value="ECO:0007669"/>
    <property type="project" value="UniProtKB-UniRule"/>
</dbReference>
<dbReference type="GO" id="GO:0051262">
    <property type="term" value="P:protein tetramerization"/>
    <property type="evidence" value="ECO:0007669"/>
    <property type="project" value="InterPro"/>
</dbReference>
<dbReference type="GO" id="GO:0015031">
    <property type="term" value="P:protein transport"/>
    <property type="evidence" value="ECO:0007669"/>
    <property type="project" value="UniProtKB-UniRule"/>
</dbReference>
<dbReference type="Gene3D" id="3.10.420.10">
    <property type="entry name" value="SecB-like"/>
    <property type="match status" value="1"/>
</dbReference>
<dbReference type="HAMAP" id="MF_00821">
    <property type="entry name" value="SecB"/>
    <property type="match status" value="1"/>
</dbReference>
<dbReference type="InterPro" id="IPR003708">
    <property type="entry name" value="SecB"/>
</dbReference>
<dbReference type="InterPro" id="IPR035958">
    <property type="entry name" value="SecB-like_sf"/>
</dbReference>
<dbReference type="NCBIfam" id="NF004392">
    <property type="entry name" value="PRK05751.1-3"/>
    <property type="match status" value="1"/>
</dbReference>
<dbReference type="NCBIfam" id="TIGR00809">
    <property type="entry name" value="secB"/>
    <property type="match status" value="1"/>
</dbReference>
<dbReference type="PANTHER" id="PTHR36918">
    <property type="match status" value="1"/>
</dbReference>
<dbReference type="PANTHER" id="PTHR36918:SF1">
    <property type="entry name" value="PROTEIN-EXPORT PROTEIN SECB"/>
    <property type="match status" value="1"/>
</dbReference>
<dbReference type="Pfam" id="PF02556">
    <property type="entry name" value="SecB"/>
    <property type="match status" value="1"/>
</dbReference>
<dbReference type="PRINTS" id="PR01594">
    <property type="entry name" value="SECBCHAPRONE"/>
</dbReference>
<dbReference type="SUPFAM" id="SSF54611">
    <property type="entry name" value="SecB-like"/>
    <property type="match status" value="1"/>
</dbReference>
<organism>
    <name type="scientific">Chelativorans sp. (strain BNC1)</name>
    <dbReference type="NCBI Taxonomy" id="266779"/>
    <lineage>
        <taxon>Bacteria</taxon>
        <taxon>Pseudomonadati</taxon>
        <taxon>Pseudomonadota</taxon>
        <taxon>Alphaproteobacteria</taxon>
        <taxon>Hyphomicrobiales</taxon>
        <taxon>Phyllobacteriaceae</taxon>
        <taxon>Chelativorans</taxon>
    </lineage>
</organism>
<accession>Q11CM1</accession>
<evidence type="ECO:0000255" key="1">
    <source>
        <dbReference type="HAMAP-Rule" id="MF_00821"/>
    </source>
</evidence>
<evidence type="ECO:0000256" key="2">
    <source>
        <dbReference type="SAM" id="MobiDB-lite"/>
    </source>
</evidence>